<protein>
    <recommendedName>
        <fullName evidence="2">4-amino-5-hydroxymethyl-2-methylpyrimidine phosphate synthase</fullName>
        <shortName evidence="2">HMP-P synthase</shortName>
        <shortName evidence="2">Hydroxymethylpyrimidine phosphate synthase</shortName>
        <ecNumber evidence="2">2.-.-.-</ecNumber>
    </recommendedName>
    <alternativeName>
        <fullName evidence="1">Thiamine pyrimidine synthase</fullName>
    </alternativeName>
</protein>
<dbReference type="EC" id="2.-.-.-" evidence="2"/>
<dbReference type="EMBL" id="U15196">
    <property type="protein sequence ID" value="AAA70083.1"/>
    <property type="molecule type" value="mRNA"/>
</dbReference>
<dbReference type="PIR" id="S53697">
    <property type="entry name" value="S53697"/>
</dbReference>
<dbReference type="SMR" id="P42882"/>
<dbReference type="VEuPathDB" id="FungiDB:BDV34DRAFT_126730"/>
<dbReference type="UniPathway" id="UPA00060"/>
<dbReference type="GO" id="GO:0106344">
    <property type="term" value="F:4-amino-5-hydroxymethyl-2-methylpyrimidine phosphate synthase activity from histidine and PLP"/>
    <property type="evidence" value="ECO:0000250"/>
    <property type="project" value="UniProtKB"/>
</dbReference>
<dbReference type="GO" id="GO:0046872">
    <property type="term" value="F:metal ion binding"/>
    <property type="evidence" value="ECO:0007669"/>
    <property type="project" value="UniProtKB-KW"/>
</dbReference>
<dbReference type="GO" id="GO:0009228">
    <property type="term" value="P:thiamine biosynthetic process"/>
    <property type="evidence" value="ECO:0007669"/>
    <property type="project" value="UniProtKB-KW"/>
</dbReference>
<dbReference type="GO" id="GO:0009229">
    <property type="term" value="P:thiamine diphosphate biosynthetic process"/>
    <property type="evidence" value="ECO:0007669"/>
    <property type="project" value="UniProtKB-UniPathway"/>
</dbReference>
<dbReference type="CDD" id="cd13650">
    <property type="entry name" value="PBP2_THI5"/>
    <property type="match status" value="1"/>
</dbReference>
<dbReference type="FunFam" id="3.40.190.10:FF:000187">
    <property type="entry name" value="4-amino-5-hydroxymethyl-2-methylpyrimidine phosphate synthase THI5"/>
    <property type="match status" value="1"/>
</dbReference>
<dbReference type="Gene3D" id="3.40.190.10">
    <property type="entry name" value="Periplasmic binding protein-like II"/>
    <property type="match status" value="2"/>
</dbReference>
<dbReference type="InterPro" id="IPR027939">
    <property type="entry name" value="NMT1/THI5"/>
</dbReference>
<dbReference type="InterPro" id="IPR015168">
    <property type="entry name" value="SsuA/THI5"/>
</dbReference>
<dbReference type="PANTHER" id="PTHR31528">
    <property type="entry name" value="4-AMINO-5-HYDROXYMETHYL-2-METHYLPYRIMIDINE PHOSPHATE SYNTHASE THI11-RELATED"/>
    <property type="match status" value="1"/>
</dbReference>
<dbReference type="PANTHER" id="PTHR31528:SF1">
    <property type="entry name" value="4-AMINO-5-HYDROXYMETHYL-2-METHYLPYRIMIDINE PHOSPHATE SYNTHASE THI11-RELATED"/>
    <property type="match status" value="1"/>
</dbReference>
<dbReference type="Pfam" id="PF09084">
    <property type="entry name" value="NMT1"/>
    <property type="match status" value="1"/>
</dbReference>
<dbReference type="SUPFAM" id="SSF53850">
    <property type="entry name" value="Periplasmic binding protein-like II"/>
    <property type="match status" value="1"/>
</dbReference>
<reference key="1">
    <citation type="journal article" date="1995" name="Biochim. Biophys. Acta">
        <title>Nucleotide sequence of an Aspergillus parasiticus gene strongly repressed by thiamine.</title>
        <authorList>
            <person name="Cary J.W."/>
            <person name="Bhatnagar D."/>
        </authorList>
    </citation>
    <scope>NUCLEOTIDE SEQUENCE [MRNA]</scope>
    <scope>INDUCTION</scope>
    <source>
        <strain>ATCC 56775 / NRRL 5862 / Su-1 / SRRC 143</strain>
    </source>
</reference>
<proteinExistence type="evidence at transcript level"/>
<feature type="chain" id="PRO_0000211622" description="4-amino-5-hydroxymethyl-2-methylpyrimidine phosphate synthase">
    <location>
        <begin position="1"/>
        <end position="342"/>
    </location>
</feature>
<feature type="short sequence motif" description="CCCFC; essential for catalytic activity, may be the site of iron coordination" evidence="2">
    <location>
        <begin position="195"/>
        <end position="199"/>
    </location>
</feature>
<feature type="active site" evidence="2">
    <location>
        <position position="66"/>
    </location>
</feature>
<feature type="binding site" evidence="2">
    <location>
        <begin position="115"/>
        <end position="118"/>
    </location>
    <ligand>
        <name>pyridoxal 5'-phosphate</name>
        <dbReference type="ChEBI" id="CHEBI:597326"/>
    </ligand>
</feature>
<feature type="modified residue" description="N6-(pyridoxal phosphate)lysine" evidence="2">
    <location>
        <position position="62"/>
    </location>
</feature>
<comment type="function">
    <text evidence="2">Responsible for the formation of the pyrimidine heterocycle in the thiamine biosynthesis pathway. Catalyzes the formation of hydroxymethylpyrimidine phosphate (HMP-P) from histidine and pyridoxal phosphate (PLP). The protein uses PLP and the active site histidine to form HMP-P, generating an inactive enzyme. The enzyme can only undergo a single turnover, which suggests it is a suicide enzyme.</text>
</comment>
<comment type="catalytic activity">
    <reaction evidence="2">
        <text>N(6)-(pyridoxal phosphate)-L-lysyl-[4-amino-5-hydroxymethyl-2-methylpyrimidine phosphate synthase] + L-histidyl-[4-amino-5-hydroxymethyl-2-methylpyrimidine phosphate synthase] + 2 Fe(3+) + 4 H2O = L-lysyl-[4-amino-5-hydroxymethyl-2-methylpyrimidine phosphate synthase] + (2S)-2-amino-5-hydroxy-4-oxopentanoyl-[4-amino-5-hydroxymethyl-2-methylpyrimidine phosphate synthase] + 4-amino-2-methyl-5-(phosphooxymethyl)pyrimidine + 3-oxopropanoate + 2 Fe(2+) + 2 H(+)</text>
        <dbReference type="Rhea" id="RHEA:65756"/>
        <dbReference type="Rhea" id="RHEA-COMP:16892"/>
        <dbReference type="Rhea" id="RHEA-COMP:16893"/>
        <dbReference type="Rhea" id="RHEA-COMP:16894"/>
        <dbReference type="Rhea" id="RHEA-COMP:16895"/>
        <dbReference type="ChEBI" id="CHEBI:15377"/>
        <dbReference type="ChEBI" id="CHEBI:15378"/>
        <dbReference type="ChEBI" id="CHEBI:29033"/>
        <dbReference type="ChEBI" id="CHEBI:29034"/>
        <dbReference type="ChEBI" id="CHEBI:29969"/>
        <dbReference type="ChEBI" id="CHEBI:29979"/>
        <dbReference type="ChEBI" id="CHEBI:33190"/>
        <dbReference type="ChEBI" id="CHEBI:58354"/>
        <dbReference type="ChEBI" id="CHEBI:143915"/>
        <dbReference type="ChEBI" id="CHEBI:157692"/>
    </reaction>
    <physiologicalReaction direction="left-to-right" evidence="2">
        <dbReference type="Rhea" id="RHEA:65757"/>
    </physiologicalReaction>
</comment>
<comment type="cofactor">
    <cofactor evidence="2">
        <name>Fe cation</name>
        <dbReference type="ChEBI" id="CHEBI:24875"/>
    </cofactor>
</comment>
<comment type="pathway">
    <text evidence="6">Cofactor biosynthesis; thiamine diphosphate biosynthesis.</text>
</comment>
<comment type="subunit">
    <text evidence="2">Homodimer.</text>
</comment>
<comment type="induction">
    <text evidence="3">Repressed by thiamine.</text>
</comment>
<comment type="similarity">
    <text evidence="5">Belongs to the NMT1/THI5 family.</text>
</comment>
<organism>
    <name type="scientific">Aspergillus parasiticus</name>
    <dbReference type="NCBI Taxonomy" id="5067"/>
    <lineage>
        <taxon>Eukaryota</taxon>
        <taxon>Fungi</taxon>
        <taxon>Dikarya</taxon>
        <taxon>Ascomycota</taxon>
        <taxon>Pezizomycotina</taxon>
        <taxon>Eurotiomycetes</taxon>
        <taxon>Eurotiomycetidae</taxon>
        <taxon>Eurotiales</taxon>
        <taxon>Aspergillaceae</taxon>
        <taxon>Aspergillus</taxon>
        <taxon>Aspergillus subgen. Circumdati</taxon>
    </lineage>
</organism>
<sequence length="342" mass="38198">MSTDKITFLTNWHATPYHAPLYLAQSKGYFKEEGLKVALLEPNDPSDVTEIIGSGKVDMGFKAMIHTLAAKARNFPVTSIGSLLDEPFTGVVYLKDSGITEDFRSLKGKKIGYVGEFGKIQIDELTKYYGMTADDYTAVRCGMNVTKAIIRGDIDAGIGLENVQMVELAEWLASQNRPRDDVQIVRIDQLAELGCCCFCSILYIANDAFLAANPEKVQKFMRAVKRATDYVLAEPAAAFEEYVDMKPIMGTPVNRKIFERSFAYFSRDLKNVSRDWAKVTNYGKRLGILDADFQPNYTNQYLSWTLDADSTDPLGDQKRMAELQKEVACEGGFKRLQVASSA</sequence>
<gene>
    <name evidence="4" type="primary">nmt1</name>
</gene>
<accession>P42882</accession>
<evidence type="ECO:0000250" key="1">
    <source>
        <dbReference type="UniProtKB" id="C4YMW2"/>
    </source>
</evidence>
<evidence type="ECO:0000250" key="2">
    <source>
        <dbReference type="UniProtKB" id="P43534"/>
    </source>
</evidence>
<evidence type="ECO:0000269" key="3">
    <source>
    </source>
</evidence>
<evidence type="ECO:0000303" key="4">
    <source>
    </source>
</evidence>
<evidence type="ECO:0000305" key="5"/>
<evidence type="ECO:0000305" key="6">
    <source>
    </source>
</evidence>
<keyword id="KW-0408">Iron</keyword>
<keyword id="KW-0479">Metal-binding</keyword>
<keyword id="KW-0663">Pyridoxal phosphate</keyword>
<keyword id="KW-0784">Thiamine biosynthesis</keyword>
<keyword id="KW-0808">Transferase</keyword>
<name>NMT1_ASPPA</name>